<evidence type="ECO:0000255" key="1">
    <source>
        <dbReference type="HAMAP-Rule" id="MF_00152"/>
    </source>
</evidence>
<accession>Q5PE50</accession>
<feature type="chain" id="PRO_1000011331" description="Probable endonuclease 4">
    <location>
        <begin position="1"/>
        <end position="285"/>
    </location>
</feature>
<feature type="binding site" evidence="1">
    <location>
        <position position="69"/>
    </location>
    <ligand>
        <name>Zn(2+)</name>
        <dbReference type="ChEBI" id="CHEBI:29105"/>
        <label>1</label>
    </ligand>
</feature>
<feature type="binding site" evidence="1">
    <location>
        <position position="109"/>
    </location>
    <ligand>
        <name>Zn(2+)</name>
        <dbReference type="ChEBI" id="CHEBI:29105"/>
        <label>1</label>
    </ligand>
</feature>
<feature type="binding site" evidence="1">
    <location>
        <position position="145"/>
    </location>
    <ligand>
        <name>Zn(2+)</name>
        <dbReference type="ChEBI" id="CHEBI:29105"/>
        <label>1</label>
    </ligand>
</feature>
<feature type="binding site" evidence="1">
    <location>
        <position position="145"/>
    </location>
    <ligand>
        <name>Zn(2+)</name>
        <dbReference type="ChEBI" id="CHEBI:29105"/>
        <label>2</label>
    </ligand>
</feature>
<feature type="binding site" evidence="1">
    <location>
        <position position="179"/>
    </location>
    <ligand>
        <name>Zn(2+)</name>
        <dbReference type="ChEBI" id="CHEBI:29105"/>
        <label>2</label>
    </ligand>
</feature>
<feature type="binding site" evidence="1">
    <location>
        <position position="182"/>
    </location>
    <ligand>
        <name>Zn(2+)</name>
        <dbReference type="ChEBI" id="CHEBI:29105"/>
        <label>3</label>
    </ligand>
</feature>
<feature type="binding site" evidence="1">
    <location>
        <position position="216"/>
    </location>
    <ligand>
        <name>Zn(2+)</name>
        <dbReference type="ChEBI" id="CHEBI:29105"/>
        <label>2</label>
    </ligand>
</feature>
<feature type="binding site" evidence="1">
    <location>
        <position position="229"/>
    </location>
    <ligand>
        <name>Zn(2+)</name>
        <dbReference type="ChEBI" id="CHEBI:29105"/>
        <label>3</label>
    </ligand>
</feature>
<feature type="binding site" evidence="1">
    <location>
        <position position="231"/>
    </location>
    <ligand>
        <name>Zn(2+)</name>
        <dbReference type="ChEBI" id="CHEBI:29105"/>
        <label>3</label>
    </ligand>
</feature>
<feature type="binding site" evidence="1">
    <location>
        <position position="261"/>
    </location>
    <ligand>
        <name>Zn(2+)</name>
        <dbReference type="ChEBI" id="CHEBI:29105"/>
        <label>2</label>
    </ligand>
</feature>
<reference key="1">
    <citation type="journal article" date="2004" name="Nat. Genet.">
        <title>Comparison of genome degradation in Paratyphi A and Typhi, human-restricted serovars of Salmonella enterica that cause typhoid.</title>
        <authorList>
            <person name="McClelland M."/>
            <person name="Sanderson K.E."/>
            <person name="Clifton S.W."/>
            <person name="Latreille P."/>
            <person name="Porwollik S."/>
            <person name="Sabo A."/>
            <person name="Meyer R."/>
            <person name="Bieri T."/>
            <person name="Ozersky P."/>
            <person name="McLellan M."/>
            <person name="Harkins C.R."/>
            <person name="Wang C."/>
            <person name="Nguyen C."/>
            <person name="Berghoff A."/>
            <person name="Elliott G."/>
            <person name="Kohlberg S."/>
            <person name="Strong C."/>
            <person name="Du F."/>
            <person name="Carter J."/>
            <person name="Kremizki C."/>
            <person name="Layman D."/>
            <person name="Leonard S."/>
            <person name="Sun H."/>
            <person name="Fulton L."/>
            <person name="Nash W."/>
            <person name="Miner T."/>
            <person name="Minx P."/>
            <person name="Delehaunty K."/>
            <person name="Fronick C."/>
            <person name="Magrini V."/>
            <person name="Nhan M."/>
            <person name="Warren W."/>
            <person name="Florea L."/>
            <person name="Spieth J."/>
            <person name="Wilson R.K."/>
        </authorList>
    </citation>
    <scope>NUCLEOTIDE SEQUENCE [LARGE SCALE GENOMIC DNA]</scope>
    <source>
        <strain>ATCC 9150 / SARB42</strain>
    </source>
</reference>
<gene>
    <name evidence="1" type="primary">nfo</name>
    <name type="ordered locus">SPA0648</name>
</gene>
<name>END4_SALPA</name>
<keyword id="KW-0227">DNA damage</keyword>
<keyword id="KW-0234">DNA repair</keyword>
<keyword id="KW-0255">Endonuclease</keyword>
<keyword id="KW-0378">Hydrolase</keyword>
<keyword id="KW-0479">Metal-binding</keyword>
<keyword id="KW-0540">Nuclease</keyword>
<keyword id="KW-0862">Zinc</keyword>
<dbReference type="EC" id="3.1.21.2" evidence="1"/>
<dbReference type="EMBL" id="CP000026">
    <property type="protein sequence ID" value="AAV76648.1"/>
    <property type="molecule type" value="Genomic_DNA"/>
</dbReference>
<dbReference type="RefSeq" id="WP_000873907.1">
    <property type="nucleotide sequence ID" value="NC_006511.1"/>
</dbReference>
<dbReference type="SMR" id="Q5PE50"/>
<dbReference type="KEGG" id="spt:SPA0648"/>
<dbReference type="HOGENOM" id="CLU_025885_0_4_6"/>
<dbReference type="Proteomes" id="UP000008185">
    <property type="component" value="Chromosome"/>
</dbReference>
<dbReference type="GO" id="GO:0008833">
    <property type="term" value="F:deoxyribonuclease IV (phage-T4-induced) activity"/>
    <property type="evidence" value="ECO:0007669"/>
    <property type="project" value="UniProtKB-UniRule"/>
</dbReference>
<dbReference type="GO" id="GO:0003677">
    <property type="term" value="F:DNA binding"/>
    <property type="evidence" value="ECO:0007669"/>
    <property type="project" value="InterPro"/>
</dbReference>
<dbReference type="GO" id="GO:0003906">
    <property type="term" value="F:DNA-(apurinic or apyrimidinic site) endonuclease activity"/>
    <property type="evidence" value="ECO:0007669"/>
    <property type="project" value="TreeGrafter"/>
</dbReference>
<dbReference type="GO" id="GO:0008081">
    <property type="term" value="F:phosphoric diester hydrolase activity"/>
    <property type="evidence" value="ECO:0007669"/>
    <property type="project" value="TreeGrafter"/>
</dbReference>
<dbReference type="GO" id="GO:0008270">
    <property type="term" value="F:zinc ion binding"/>
    <property type="evidence" value="ECO:0007669"/>
    <property type="project" value="UniProtKB-UniRule"/>
</dbReference>
<dbReference type="GO" id="GO:0006284">
    <property type="term" value="P:base-excision repair"/>
    <property type="evidence" value="ECO:0007669"/>
    <property type="project" value="TreeGrafter"/>
</dbReference>
<dbReference type="CDD" id="cd00019">
    <property type="entry name" value="AP2Ec"/>
    <property type="match status" value="1"/>
</dbReference>
<dbReference type="FunFam" id="3.20.20.150:FF:000001">
    <property type="entry name" value="Probable endonuclease 4"/>
    <property type="match status" value="1"/>
</dbReference>
<dbReference type="Gene3D" id="3.20.20.150">
    <property type="entry name" value="Divalent-metal-dependent TIM barrel enzymes"/>
    <property type="match status" value="1"/>
</dbReference>
<dbReference type="HAMAP" id="MF_00152">
    <property type="entry name" value="Nfo"/>
    <property type="match status" value="1"/>
</dbReference>
<dbReference type="InterPro" id="IPR001719">
    <property type="entry name" value="AP_endonuc_2"/>
</dbReference>
<dbReference type="InterPro" id="IPR018246">
    <property type="entry name" value="AP_endonuc_F2_Zn_BS"/>
</dbReference>
<dbReference type="InterPro" id="IPR036237">
    <property type="entry name" value="Xyl_isomerase-like_sf"/>
</dbReference>
<dbReference type="InterPro" id="IPR013022">
    <property type="entry name" value="Xyl_isomerase-like_TIM-brl"/>
</dbReference>
<dbReference type="NCBIfam" id="TIGR00587">
    <property type="entry name" value="nfo"/>
    <property type="match status" value="1"/>
</dbReference>
<dbReference type="NCBIfam" id="NF002199">
    <property type="entry name" value="PRK01060.1-4"/>
    <property type="match status" value="1"/>
</dbReference>
<dbReference type="PANTHER" id="PTHR21445:SF0">
    <property type="entry name" value="APURINIC-APYRIMIDINIC ENDONUCLEASE"/>
    <property type="match status" value="1"/>
</dbReference>
<dbReference type="PANTHER" id="PTHR21445">
    <property type="entry name" value="ENDONUCLEASE IV ENDODEOXYRIBONUCLEASE IV"/>
    <property type="match status" value="1"/>
</dbReference>
<dbReference type="Pfam" id="PF01261">
    <property type="entry name" value="AP_endonuc_2"/>
    <property type="match status" value="1"/>
</dbReference>
<dbReference type="SMART" id="SM00518">
    <property type="entry name" value="AP2Ec"/>
    <property type="match status" value="1"/>
</dbReference>
<dbReference type="SUPFAM" id="SSF51658">
    <property type="entry name" value="Xylose isomerase-like"/>
    <property type="match status" value="1"/>
</dbReference>
<dbReference type="PROSITE" id="PS00729">
    <property type="entry name" value="AP_NUCLEASE_F2_1"/>
    <property type="match status" value="1"/>
</dbReference>
<dbReference type="PROSITE" id="PS00730">
    <property type="entry name" value="AP_NUCLEASE_F2_2"/>
    <property type="match status" value="1"/>
</dbReference>
<dbReference type="PROSITE" id="PS00731">
    <property type="entry name" value="AP_NUCLEASE_F2_3"/>
    <property type="match status" value="1"/>
</dbReference>
<dbReference type="PROSITE" id="PS51432">
    <property type="entry name" value="AP_NUCLEASE_F2_4"/>
    <property type="match status" value="1"/>
</dbReference>
<sequence length="285" mass="31238">MKYIGAHVSAAGGLANAPARAAEIGATAFALFTKNQRQWRAAPLTPQVIDDFKIACEKYHFSAAQILPHDSYLINLGHPVSEALEKSRDAFLDEMQRCEQLGLTLLNFHPGSHLMQIAQEDCLARIAESINIALAQTEGVTAVIENTAGQGSNLGFEFEQLAAIIDGVEDKSRVGVCIDTCHAFAAGYDLRTPEACEKTFAEFGKIVGFQYLRGMHLNDAKSAFGSRVDRHHSLGEGNIGHDAFRWIMQDARFDGIPLILETINPDIWAEEIAWLKAQQIAEVMA</sequence>
<comment type="function">
    <text evidence="1">Endonuclease IV plays a role in DNA repair. It cleaves phosphodiester bonds at apurinic or apyrimidinic (AP) sites, generating a 3'-hydroxyl group and a 5'-terminal sugar phosphate.</text>
</comment>
<comment type="catalytic activity">
    <reaction evidence="1">
        <text>Endonucleolytic cleavage to 5'-phosphooligonucleotide end-products.</text>
        <dbReference type="EC" id="3.1.21.2"/>
    </reaction>
</comment>
<comment type="cofactor">
    <cofactor evidence="1">
        <name>Zn(2+)</name>
        <dbReference type="ChEBI" id="CHEBI:29105"/>
    </cofactor>
    <text evidence="1">Binds 3 Zn(2+) ions.</text>
</comment>
<comment type="similarity">
    <text evidence="1">Belongs to the AP endonuclease 2 family.</text>
</comment>
<organism>
    <name type="scientific">Salmonella paratyphi A (strain ATCC 9150 / SARB42)</name>
    <dbReference type="NCBI Taxonomy" id="295319"/>
    <lineage>
        <taxon>Bacteria</taxon>
        <taxon>Pseudomonadati</taxon>
        <taxon>Pseudomonadota</taxon>
        <taxon>Gammaproteobacteria</taxon>
        <taxon>Enterobacterales</taxon>
        <taxon>Enterobacteriaceae</taxon>
        <taxon>Salmonella</taxon>
    </lineage>
</organism>
<proteinExistence type="inferred from homology"/>
<protein>
    <recommendedName>
        <fullName evidence="1">Probable endonuclease 4</fullName>
        <ecNumber evidence="1">3.1.21.2</ecNumber>
    </recommendedName>
    <alternativeName>
        <fullName evidence="1">Endodeoxyribonuclease IV</fullName>
    </alternativeName>
    <alternativeName>
        <fullName evidence="1">Endonuclease IV</fullName>
    </alternativeName>
</protein>